<name>ATP6_MARPO</name>
<accession>P26853</accession>
<protein>
    <recommendedName>
        <fullName>ATP synthase subunit a</fullName>
    </recommendedName>
    <alternativeName>
        <fullName>F-ATPase protein 6</fullName>
    </alternativeName>
</protein>
<organism>
    <name type="scientific">Marchantia polymorpha</name>
    <name type="common">Common liverwort</name>
    <name type="synonym">Marchantia aquatica</name>
    <dbReference type="NCBI Taxonomy" id="3197"/>
    <lineage>
        <taxon>Eukaryota</taxon>
        <taxon>Viridiplantae</taxon>
        <taxon>Streptophyta</taxon>
        <taxon>Embryophyta</taxon>
        <taxon>Marchantiophyta</taxon>
        <taxon>Marchantiopsida</taxon>
        <taxon>Marchantiidae</taxon>
        <taxon>Marchantiales</taxon>
        <taxon>Marchantiaceae</taxon>
        <taxon>Marchantia</taxon>
    </lineage>
</organism>
<reference key="1">
    <citation type="journal article" date="1992" name="J. Mol. Biol.">
        <title>Gene organization deduced from the complete sequence of liverwort Marchantia polymorpha mitochondrial DNA. A primitive form of plant mitochondrial genome.</title>
        <authorList>
            <person name="Oda K."/>
            <person name="Yamato K."/>
            <person name="Ohta E."/>
            <person name="Nakamura Y."/>
            <person name="Takemura M."/>
            <person name="Nozato N."/>
            <person name="Akashi K."/>
            <person name="Kanegae T."/>
            <person name="Ogura Y."/>
            <person name="Kohchi T."/>
            <person name="Ohyama K."/>
        </authorList>
    </citation>
    <scope>NUCLEOTIDE SEQUENCE [GENOMIC DNA]</scope>
</reference>
<gene>
    <name type="primary">ATP6</name>
</gene>
<keyword id="KW-0066">ATP synthesis</keyword>
<keyword id="KW-0138">CF(0)</keyword>
<keyword id="KW-0375">Hydrogen ion transport</keyword>
<keyword id="KW-0406">Ion transport</keyword>
<keyword id="KW-0472">Membrane</keyword>
<keyword id="KW-0496">Mitochondrion</keyword>
<keyword id="KW-0999">Mitochondrion inner membrane</keyword>
<keyword id="KW-0812">Transmembrane</keyword>
<keyword id="KW-1133">Transmembrane helix</keyword>
<keyword id="KW-0813">Transport</keyword>
<comment type="function">
    <text>Mitochondrial membrane ATP synthase (F(1)F(0) ATP synthase or Complex V) produces ATP from ADP in the presence of a proton gradient across the membrane which is generated by electron transport complexes of the respiratory chain. F-type ATPases consist of two structural domains, F(1) - containing the extramembraneous catalytic core and F(0) - containing the membrane proton channel, linked together by a central stalk and a peripheral stalk. During catalysis, ATP synthesis in the catalytic domain of F(1) is coupled via a rotary mechanism of the central stalk subunits to proton translocation. Key component of the proton channel; it may play a direct role in the translocation of protons across the membrane.</text>
</comment>
<comment type="subunit">
    <text>F-type ATPases have 2 components, CF(1) - the catalytic core - and CF(0) - the membrane proton channel. CF(1) has five subunits: alpha(3), beta(3), gamma(1), delta(1), epsilon(1). CF(0) has three main subunits: a, b and c.</text>
</comment>
<comment type="subcellular location">
    <subcellularLocation>
        <location>Mitochondrion inner membrane</location>
        <topology>Multi-pass membrane protein</topology>
    </subcellularLocation>
</comment>
<comment type="similarity">
    <text evidence="2">Belongs to the ATPase A chain family.</text>
</comment>
<evidence type="ECO:0000255" key="1"/>
<evidence type="ECO:0000305" key="2"/>
<sequence length="252" mass="28009">MACSPLEQFAIIQLIPIHIGNLYFSFTNSSLFMLLTISLVLLLVHFVTLNGGNLVPNAWQSFVEMIYDFVLNLVNEQISGASSVKQRFFPLIYVTFTFLLFCNLIGMIPYSFTVTSHFIITLGLSFSLFIGITIVGFQTHGLHFFSILLPQGVPLPLAPFLVLLELISYCFRALSLGIRLFANMMAGHSLVKILSGFAWTMLSMGGILYLGQLAPFFIVFALTGLELGVAILQAYVFTILLCIYLNDAINLH</sequence>
<proteinExistence type="inferred from homology"/>
<dbReference type="EMBL" id="M68929">
    <property type="protein sequence ID" value="AAC09404.1"/>
    <property type="molecule type" value="Genomic_DNA"/>
</dbReference>
<dbReference type="PIR" id="S25965">
    <property type="entry name" value="S25965"/>
</dbReference>
<dbReference type="RefSeq" id="NP_054407.1">
    <property type="nucleotide sequence ID" value="NC_001660.1"/>
</dbReference>
<dbReference type="SMR" id="P26853"/>
<dbReference type="GeneID" id="2702669"/>
<dbReference type="GO" id="GO:0005743">
    <property type="term" value="C:mitochondrial inner membrane"/>
    <property type="evidence" value="ECO:0007669"/>
    <property type="project" value="UniProtKB-SubCell"/>
</dbReference>
<dbReference type="GO" id="GO:0045259">
    <property type="term" value="C:proton-transporting ATP synthase complex"/>
    <property type="evidence" value="ECO:0007669"/>
    <property type="project" value="UniProtKB-KW"/>
</dbReference>
<dbReference type="GO" id="GO:0015078">
    <property type="term" value="F:proton transmembrane transporter activity"/>
    <property type="evidence" value="ECO:0007669"/>
    <property type="project" value="InterPro"/>
</dbReference>
<dbReference type="GO" id="GO:0015986">
    <property type="term" value="P:proton motive force-driven ATP synthesis"/>
    <property type="evidence" value="ECO:0007669"/>
    <property type="project" value="InterPro"/>
</dbReference>
<dbReference type="CDD" id="cd00310">
    <property type="entry name" value="ATP-synt_Fo_a_6"/>
    <property type="match status" value="1"/>
</dbReference>
<dbReference type="FunFam" id="1.20.120.220:FF:000003">
    <property type="entry name" value="ATP synthase subunit a"/>
    <property type="match status" value="1"/>
</dbReference>
<dbReference type="Gene3D" id="1.20.120.220">
    <property type="entry name" value="ATP synthase, F0 complex, subunit A"/>
    <property type="match status" value="1"/>
</dbReference>
<dbReference type="HAMAP" id="MF_01393">
    <property type="entry name" value="ATP_synth_a_bact"/>
    <property type="match status" value="1"/>
</dbReference>
<dbReference type="InterPro" id="IPR000568">
    <property type="entry name" value="ATP_synth_F0_asu"/>
</dbReference>
<dbReference type="InterPro" id="IPR023011">
    <property type="entry name" value="ATP_synth_F0_asu_AS"/>
</dbReference>
<dbReference type="InterPro" id="IPR045083">
    <property type="entry name" value="ATP_synth_F0_asu_bact/mt"/>
</dbReference>
<dbReference type="InterPro" id="IPR035908">
    <property type="entry name" value="F0_ATP_A_sf"/>
</dbReference>
<dbReference type="NCBIfam" id="TIGR01131">
    <property type="entry name" value="ATP_synt_6_or_A"/>
    <property type="match status" value="1"/>
</dbReference>
<dbReference type="NCBIfam" id="NF004482">
    <property type="entry name" value="PRK05815.2-4"/>
    <property type="match status" value="1"/>
</dbReference>
<dbReference type="PANTHER" id="PTHR11410">
    <property type="entry name" value="ATP SYNTHASE SUBUNIT A"/>
    <property type="match status" value="1"/>
</dbReference>
<dbReference type="PANTHER" id="PTHR11410:SF0">
    <property type="entry name" value="ATP SYNTHASE SUBUNIT A"/>
    <property type="match status" value="1"/>
</dbReference>
<dbReference type="Pfam" id="PF00119">
    <property type="entry name" value="ATP-synt_A"/>
    <property type="match status" value="1"/>
</dbReference>
<dbReference type="PRINTS" id="PR00123">
    <property type="entry name" value="ATPASEA"/>
</dbReference>
<dbReference type="SUPFAM" id="SSF81336">
    <property type="entry name" value="F1F0 ATP synthase subunit A"/>
    <property type="match status" value="1"/>
</dbReference>
<dbReference type="PROSITE" id="PS00449">
    <property type="entry name" value="ATPASE_A"/>
    <property type="match status" value="1"/>
</dbReference>
<feature type="chain" id="PRO_0000082137" description="ATP synthase subunit a">
    <location>
        <begin position="1"/>
        <end position="252"/>
    </location>
</feature>
<feature type="transmembrane region" description="Helical" evidence="1">
    <location>
        <begin position="6"/>
        <end position="26"/>
    </location>
</feature>
<feature type="transmembrane region" description="Helical" evidence="1">
    <location>
        <begin position="31"/>
        <end position="51"/>
    </location>
</feature>
<feature type="transmembrane region" description="Helical" evidence="1">
    <location>
        <begin position="88"/>
        <end position="108"/>
    </location>
</feature>
<feature type="transmembrane region" description="Helical" evidence="1">
    <location>
        <begin position="117"/>
        <end position="137"/>
    </location>
</feature>
<feature type="transmembrane region" description="Helical" evidence="1">
    <location>
        <begin position="144"/>
        <end position="164"/>
    </location>
</feature>
<feature type="transmembrane region" description="Helical" evidence="1">
    <location>
        <begin position="190"/>
        <end position="212"/>
    </location>
</feature>
<feature type="transmembrane region" description="Helical" evidence="1">
    <location>
        <begin position="225"/>
        <end position="245"/>
    </location>
</feature>
<geneLocation type="mitochondrion"/>